<evidence type="ECO:0000269" key="1">
    <source>
    </source>
</evidence>
<evidence type="ECO:0000269" key="2">
    <source>
    </source>
</evidence>
<evidence type="ECO:0000269" key="3">
    <source>
    </source>
</evidence>
<evidence type="ECO:0000303" key="4">
    <source>
    </source>
</evidence>
<evidence type="ECO:0000303" key="5">
    <source>
    </source>
</evidence>
<evidence type="ECO:0000303" key="6">
    <source>
    </source>
</evidence>
<evidence type="ECO:0007744" key="7">
    <source>
        <dbReference type="PDB" id="1A7V"/>
    </source>
</evidence>
<evidence type="ECO:0007744" key="8">
    <source>
        <dbReference type="PDB" id="1MQV"/>
    </source>
</evidence>
<evidence type="ECO:0007829" key="9">
    <source>
        <dbReference type="PDB" id="1MQV"/>
    </source>
</evidence>
<keyword id="KW-0002">3D-structure</keyword>
<keyword id="KW-0903">Direct protein sequencing</keyword>
<keyword id="KW-0249">Electron transport</keyword>
<keyword id="KW-0349">Heme</keyword>
<keyword id="KW-0408">Iron</keyword>
<keyword id="KW-0479">Metal-binding</keyword>
<keyword id="KW-0732">Signal</keyword>
<keyword id="KW-0813">Transport</keyword>
<accession>P00149</accession>
<dbReference type="EMBL" id="BX572600">
    <property type="protein sequence ID" value="CAE27755.1"/>
    <property type="molecule type" value="Genomic_DNA"/>
</dbReference>
<dbReference type="PIR" id="A00142">
    <property type="entry name" value="CCRFCP"/>
</dbReference>
<dbReference type="RefSeq" id="WP_011157867.1">
    <property type="nucleotide sequence ID" value="NZ_CP116810.1"/>
</dbReference>
<dbReference type="PDB" id="1A7V">
    <property type="method" value="X-ray"/>
    <property type="resolution" value="2.30 A"/>
    <property type="chains" value="A/B=22-146"/>
</dbReference>
<dbReference type="PDB" id="1MQV">
    <property type="method" value="X-ray"/>
    <property type="resolution" value="1.78 A"/>
    <property type="chains" value="A/B=22-146"/>
</dbReference>
<dbReference type="PDBsum" id="1A7V"/>
<dbReference type="PDBsum" id="1MQV"/>
<dbReference type="SMR" id="P00149"/>
<dbReference type="STRING" id="258594.RPA2314"/>
<dbReference type="GeneID" id="66893372"/>
<dbReference type="eggNOG" id="COG3909">
    <property type="taxonomic scope" value="Bacteria"/>
</dbReference>
<dbReference type="HOGENOM" id="CLU_106713_2_0_5"/>
<dbReference type="PhylomeDB" id="P00149"/>
<dbReference type="EvolutionaryTrace" id="P00149"/>
<dbReference type="GO" id="GO:0042597">
    <property type="term" value="C:periplasmic space"/>
    <property type="evidence" value="ECO:0007669"/>
    <property type="project" value="InterPro"/>
</dbReference>
<dbReference type="GO" id="GO:0009055">
    <property type="term" value="F:electron transfer activity"/>
    <property type="evidence" value="ECO:0007669"/>
    <property type="project" value="InterPro"/>
</dbReference>
<dbReference type="GO" id="GO:0020037">
    <property type="term" value="F:heme binding"/>
    <property type="evidence" value="ECO:0007669"/>
    <property type="project" value="InterPro"/>
</dbReference>
<dbReference type="GO" id="GO:0005506">
    <property type="term" value="F:iron ion binding"/>
    <property type="evidence" value="ECO:0007669"/>
    <property type="project" value="InterPro"/>
</dbReference>
<dbReference type="GO" id="GO:0022900">
    <property type="term" value="P:electron transport chain"/>
    <property type="evidence" value="ECO:0007669"/>
    <property type="project" value="InterPro"/>
</dbReference>
<dbReference type="Gene3D" id="1.20.120.10">
    <property type="entry name" value="Cytochrome c/b562"/>
    <property type="match status" value="1"/>
</dbReference>
<dbReference type="InterPro" id="IPR010980">
    <property type="entry name" value="Cyt_c/b562"/>
</dbReference>
<dbReference type="InterPro" id="IPR002321">
    <property type="entry name" value="Cyt_c_II"/>
</dbReference>
<dbReference type="InterPro" id="IPR012127">
    <property type="entry name" value="Cyt_c_prime"/>
</dbReference>
<dbReference type="Pfam" id="PF01322">
    <property type="entry name" value="Cytochrom_C_2"/>
    <property type="match status" value="1"/>
</dbReference>
<dbReference type="PIRSF" id="PIRSF000027">
    <property type="entry name" value="Cytc_c_prime"/>
    <property type="match status" value="1"/>
</dbReference>
<dbReference type="SUPFAM" id="SSF47175">
    <property type="entry name" value="Cytochromes"/>
    <property type="match status" value="1"/>
</dbReference>
<dbReference type="PROSITE" id="PS51009">
    <property type="entry name" value="CYTCII"/>
    <property type="match status" value="1"/>
</dbReference>
<reference key="1">
    <citation type="journal article" date="2004" name="Nat. Biotechnol.">
        <title>Complete genome sequence of the metabolically versatile photosynthetic bacterium Rhodopseudomonas palustris.</title>
        <authorList>
            <person name="Larimer F.W."/>
            <person name="Chain P."/>
            <person name="Hauser L."/>
            <person name="Lamerdin J.E."/>
            <person name="Malfatti S."/>
            <person name="Do L."/>
            <person name="Land M.L."/>
            <person name="Pelletier D.A."/>
            <person name="Beatty J.T."/>
            <person name="Lang A.S."/>
            <person name="Tabita F.R."/>
            <person name="Gibson J.L."/>
            <person name="Hanson T.E."/>
            <person name="Bobst C."/>
            <person name="Torres y Torres J.L."/>
            <person name="Peres C."/>
            <person name="Harrison F.H."/>
            <person name="Gibson J."/>
            <person name="Harwood C.S."/>
        </authorList>
    </citation>
    <scope>NUCLEOTIDE SEQUENCE [LARGE SCALE GENOMIC DNA]</scope>
    <source>
        <strain>ATCC BAA-98 / CGA009</strain>
    </source>
</reference>
<reference key="2">
    <citation type="journal article" date="1981" name="Proc. Natl. Acad. Sci. U.S.A.">
        <title>Amino acid sequences of bacterial cytochromes c' and c-556.</title>
        <authorList>
            <person name="Ambler R.P."/>
            <person name="Bartsch R.G."/>
            <person name="Daniel M."/>
            <person name="Kamen M.D."/>
            <person name="McLellan L."/>
            <person name="Meyer T.E."/>
            <person name="van Beeumen J."/>
        </authorList>
    </citation>
    <scope>PROTEIN SEQUENCE OF 22-146</scope>
    <source>
        <strain>ATCC 17007 / ATH 2.1.37 / NCIB 11774</strain>
    </source>
</reference>
<reference evidence="7" key="3">
    <citation type="journal article" date="1998" name="J. Mol. Biol.">
        <title>Basis for monomer stabilization in Rhodopseudomonas palustris cytochrome c' derived from the crystal structure.</title>
        <authorList>
            <person name="Shibata N."/>
            <person name="Iba S."/>
            <person name="Misaki S."/>
            <person name="Meyer T.E."/>
            <person name="Bartsch R.G."/>
            <person name="Cusanovich M.A."/>
            <person name="Morimoto Y."/>
            <person name="Higuchi Y."/>
            <person name="Yasuoka N."/>
        </authorList>
    </citation>
    <scope>X-RAY CRYSTALLOGRAPHY (2.3 ANGSTROMS) OF 22-146 IN COMPLEX WITH HEME C</scope>
</reference>
<reference evidence="8" key="4">
    <citation type="journal article" date="2002" name="Proc. Natl. Acad. Sci. U.S.A.">
        <title>Structural features of cytochrome c' folding intermediates revealed by fluorescence energy-transfer kinetics.</title>
        <authorList>
            <person name="Lee J.C."/>
            <person name="Engman K.C."/>
            <person name="Tezcan F.A."/>
            <person name="Gray H.B."/>
            <person name="Winkler J.R."/>
        </authorList>
    </citation>
    <scope>X-RAY CRYSTALLOGRAPHY (1.78 ANGSTROMS) OF 22-146 IN COMPLEX WITH HEME C</scope>
    <scope>FLUORESCENCE SPECTROSCOPY</scope>
</reference>
<proteinExistence type="evidence at protein level"/>
<gene>
    <name type="primary">cycA</name>
    <name type="ordered locus">RPA2314</name>
</gene>
<feature type="signal peptide" evidence="2">
    <location>
        <begin position="1"/>
        <end position="21"/>
    </location>
</feature>
<feature type="chain" id="PRO_0000006511" description="Cytochrome c'">
    <location>
        <begin position="22"/>
        <end position="146"/>
    </location>
</feature>
<feature type="binding site" evidence="1 3 7 8">
    <location>
        <position position="29"/>
    </location>
    <ligand>
        <name>heme c</name>
        <dbReference type="ChEBI" id="CHEBI:61717"/>
    </ligand>
</feature>
<feature type="binding site" evidence="1 3 7 8">
    <location>
        <position position="86"/>
    </location>
    <ligand>
        <name>heme c</name>
        <dbReference type="ChEBI" id="CHEBI:61717"/>
    </ligand>
</feature>
<feature type="binding site" evidence="1 3 7 8">
    <location>
        <position position="87"/>
    </location>
    <ligand>
        <name>heme c</name>
        <dbReference type="ChEBI" id="CHEBI:61717"/>
    </ligand>
</feature>
<feature type="binding site" description="covalent" evidence="1 3 7 8">
    <location>
        <position position="134"/>
    </location>
    <ligand>
        <name>heme c</name>
        <dbReference type="ChEBI" id="CHEBI:61717"/>
    </ligand>
</feature>
<feature type="binding site" description="covalent" evidence="1 3 7 8">
    <location>
        <position position="137"/>
    </location>
    <ligand>
        <name>heme c</name>
        <dbReference type="ChEBI" id="CHEBI:61717"/>
    </ligand>
</feature>
<feature type="binding site" description="axial binding residue" evidence="1 3 7 8">
    <location>
        <position position="138"/>
    </location>
    <ligand>
        <name>heme c</name>
        <dbReference type="ChEBI" id="CHEBI:61717"/>
    </ligand>
    <ligandPart>
        <name>Fe</name>
        <dbReference type="ChEBI" id="CHEBI:18248"/>
    </ligandPart>
</feature>
<feature type="helix" evidence="9">
    <location>
        <begin position="25"/>
        <end position="47"/>
    </location>
</feature>
<feature type="helix" evidence="9">
    <location>
        <begin position="55"/>
        <end position="71"/>
    </location>
</feature>
<feature type="helix" evidence="9">
    <location>
        <begin position="72"/>
        <end position="74"/>
    </location>
</feature>
<feature type="helix" evidence="9">
    <location>
        <begin position="78"/>
        <end position="80"/>
    </location>
</feature>
<feature type="helix" evidence="9">
    <location>
        <begin position="90"/>
        <end position="94"/>
    </location>
</feature>
<feature type="helix" evidence="9">
    <location>
        <begin position="96"/>
        <end position="116"/>
    </location>
</feature>
<feature type="helix" evidence="9">
    <location>
        <begin position="120"/>
        <end position="141"/>
    </location>
</feature>
<comment type="function">
    <text>Cytochrome c' is the most widely occurring bacterial c-type cytochrome. Cytochromes c' are high-spin proteins and the heme has no sixth ligand. Their exact function is not known.</text>
</comment>
<comment type="subunit">
    <text>Monomer.</text>
</comment>
<comment type="PTM">
    <text evidence="1 3">Binds 1 heme c group covalently per subunit.</text>
</comment>
<protein>
    <recommendedName>
        <fullName evidence="4 5 6">Cytochrome c'</fullName>
    </recommendedName>
</protein>
<name>CYCP_RHOPA</name>
<organism>
    <name type="scientific">Rhodopseudomonas palustris (strain ATCC BAA-98 / CGA009)</name>
    <dbReference type="NCBI Taxonomy" id="258594"/>
    <lineage>
        <taxon>Bacteria</taxon>
        <taxon>Pseudomonadati</taxon>
        <taxon>Pseudomonadota</taxon>
        <taxon>Alphaproteobacteria</taxon>
        <taxon>Hyphomicrobiales</taxon>
        <taxon>Nitrobacteraceae</taxon>
        <taxon>Rhodopseudomonas</taxon>
    </lineage>
</organism>
<sequence length="146" mass="15201">MKLRIATIAGLVVLGSGFAVAQTDVIAQRKAILKQMGEATKPIAAMLKGEAKFDQAVVQKSLAAIADDSKKLPALFPADSKTGGDTAALPKIWEDKAKFDDLFAKLAAAATAAQGTIKDEASLKANIGGVLGNCKSCHDDFRAKKS</sequence>